<dbReference type="EC" id="3.4.21.92" evidence="1"/>
<dbReference type="EMBL" id="AL935263">
    <property type="protein sequence ID" value="CCC78246.1"/>
    <property type="molecule type" value="Genomic_DNA"/>
</dbReference>
<dbReference type="RefSeq" id="WP_003641041.1">
    <property type="nucleotide sequence ID" value="NC_004567.2"/>
</dbReference>
<dbReference type="RefSeq" id="YP_004888760.1">
    <property type="nucleotide sequence ID" value="NC_004567.2"/>
</dbReference>
<dbReference type="SMR" id="Q88YH9"/>
<dbReference type="STRING" id="220668.lp_0786"/>
<dbReference type="MEROPS" id="S14.001"/>
<dbReference type="EnsemblBacteria" id="CCC78246">
    <property type="protein sequence ID" value="CCC78246"/>
    <property type="gene ID" value="lp_0786"/>
</dbReference>
<dbReference type="GeneID" id="89668346"/>
<dbReference type="KEGG" id="lpl:lp_0786"/>
<dbReference type="PATRIC" id="fig|220668.9.peg.663"/>
<dbReference type="eggNOG" id="COG0740">
    <property type="taxonomic scope" value="Bacteria"/>
</dbReference>
<dbReference type="HOGENOM" id="CLU_058707_3_2_9"/>
<dbReference type="OrthoDB" id="9802800at2"/>
<dbReference type="PhylomeDB" id="Q88YH9"/>
<dbReference type="Proteomes" id="UP000000432">
    <property type="component" value="Chromosome"/>
</dbReference>
<dbReference type="GO" id="GO:0005737">
    <property type="term" value="C:cytoplasm"/>
    <property type="evidence" value="ECO:0007669"/>
    <property type="project" value="UniProtKB-SubCell"/>
</dbReference>
<dbReference type="GO" id="GO:0009368">
    <property type="term" value="C:endopeptidase Clp complex"/>
    <property type="evidence" value="ECO:0007669"/>
    <property type="project" value="TreeGrafter"/>
</dbReference>
<dbReference type="GO" id="GO:0004176">
    <property type="term" value="F:ATP-dependent peptidase activity"/>
    <property type="evidence" value="ECO:0007669"/>
    <property type="project" value="InterPro"/>
</dbReference>
<dbReference type="GO" id="GO:0051117">
    <property type="term" value="F:ATPase binding"/>
    <property type="evidence" value="ECO:0007669"/>
    <property type="project" value="TreeGrafter"/>
</dbReference>
<dbReference type="GO" id="GO:0004252">
    <property type="term" value="F:serine-type endopeptidase activity"/>
    <property type="evidence" value="ECO:0007669"/>
    <property type="project" value="UniProtKB-UniRule"/>
</dbReference>
<dbReference type="GO" id="GO:0006515">
    <property type="term" value="P:protein quality control for misfolded or incompletely synthesized proteins"/>
    <property type="evidence" value="ECO:0007669"/>
    <property type="project" value="TreeGrafter"/>
</dbReference>
<dbReference type="CDD" id="cd07017">
    <property type="entry name" value="S14_ClpP_2"/>
    <property type="match status" value="1"/>
</dbReference>
<dbReference type="FunFam" id="3.90.226.10:FF:000014">
    <property type="entry name" value="ATP-dependent Clp protease proteolytic subunit"/>
    <property type="match status" value="1"/>
</dbReference>
<dbReference type="Gene3D" id="3.90.226.10">
    <property type="entry name" value="2-enoyl-CoA Hydratase, Chain A, domain 1"/>
    <property type="match status" value="1"/>
</dbReference>
<dbReference type="HAMAP" id="MF_00444">
    <property type="entry name" value="ClpP"/>
    <property type="match status" value="1"/>
</dbReference>
<dbReference type="InterPro" id="IPR001907">
    <property type="entry name" value="ClpP"/>
</dbReference>
<dbReference type="InterPro" id="IPR029045">
    <property type="entry name" value="ClpP/crotonase-like_dom_sf"/>
</dbReference>
<dbReference type="InterPro" id="IPR023562">
    <property type="entry name" value="ClpP/TepA"/>
</dbReference>
<dbReference type="InterPro" id="IPR033135">
    <property type="entry name" value="ClpP_His_AS"/>
</dbReference>
<dbReference type="InterPro" id="IPR018215">
    <property type="entry name" value="ClpP_Ser_AS"/>
</dbReference>
<dbReference type="NCBIfam" id="TIGR00493">
    <property type="entry name" value="clpP"/>
    <property type="match status" value="1"/>
</dbReference>
<dbReference type="NCBIfam" id="NF001368">
    <property type="entry name" value="PRK00277.1"/>
    <property type="match status" value="1"/>
</dbReference>
<dbReference type="NCBIfam" id="NF009205">
    <property type="entry name" value="PRK12553.1"/>
    <property type="match status" value="1"/>
</dbReference>
<dbReference type="PANTHER" id="PTHR10381">
    <property type="entry name" value="ATP-DEPENDENT CLP PROTEASE PROTEOLYTIC SUBUNIT"/>
    <property type="match status" value="1"/>
</dbReference>
<dbReference type="PANTHER" id="PTHR10381:SF70">
    <property type="entry name" value="ATP-DEPENDENT CLP PROTEASE PROTEOLYTIC SUBUNIT"/>
    <property type="match status" value="1"/>
</dbReference>
<dbReference type="Pfam" id="PF00574">
    <property type="entry name" value="CLP_protease"/>
    <property type="match status" value="1"/>
</dbReference>
<dbReference type="PRINTS" id="PR00127">
    <property type="entry name" value="CLPPROTEASEP"/>
</dbReference>
<dbReference type="SUPFAM" id="SSF52096">
    <property type="entry name" value="ClpP/crotonase"/>
    <property type="match status" value="1"/>
</dbReference>
<dbReference type="PROSITE" id="PS00382">
    <property type="entry name" value="CLP_PROTEASE_HIS"/>
    <property type="match status" value="1"/>
</dbReference>
<dbReference type="PROSITE" id="PS00381">
    <property type="entry name" value="CLP_PROTEASE_SER"/>
    <property type="match status" value="1"/>
</dbReference>
<protein>
    <recommendedName>
        <fullName evidence="1">ATP-dependent Clp protease proteolytic subunit</fullName>
        <ecNumber evidence="1">3.4.21.92</ecNumber>
    </recommendedName>
    <alternativeName>
        <fullName evidence="1">Endopeptidase Clp</fullName>
    </alternativeName>
</protein>
<comment type="function">
    <text evidence="1">Cleaves peptides in various proteins in a process that requires ATP hydrolysis. Has a chymotrypsin-like activity. Plays a major role in the degradation of misfolded proteins.</text>
</comment>
<comment type="catalytic activity">
    <reaction evidence="1">
        <text>Hydrolysis of proteins to small peptides in the presence of ATP and magnesium. alpha-casein is the usual test substrate. In the absence of ATP, only oligopeptides shorter than five residues are hydrolyzed (such as succinyl-Leu-Tyr-|-NHMec, and Leu-Tyr-Leu-|-Tyr-Trp, in which cleavage of the -Tyr-|-Leu- and -Tyr-|-Trp bonds also occurs).</text>
        <dbReference type="EC" id="3.4.21.92"/>
    </reaction>
</comment>
<comment type="subunit">
    <text evidence="1">Fourteen ClpP subunits assemble into 2 heptameric rings which stack back to back to give a disk-like structure with a central cavity, resembling the structure of eukaryotic proteasomes.</text>
</comment>
<comment type="subcellular location">
    <subcellularLocation>
        <location evidence="1">Cytoplasm</location>
    </subcellularLocation>
</comment>
<comment type="similarity">
    <text evidence="1">Belongs to the peptidase S14 family.</text>
</comment>
<evidence type="ECO:0000255" key="1">
    <source>
        <dbReference type="HAMAP-Rule" id="MF_00444"/>
    </source>
</evidence>
<name>CLPP_LACPL</name>
<gene>
    <name evidence="1" type="primary">clpP</name>
    <name type="ordered locus">lp_0786</name>
</gene>
<organism>
    <name type="scientific">Lactiplantibacillus plantarum (strain ATCC BAA-793 / NCIMB 8826 / WCFS1)</name>
    <name type="common">Lactobacillus plantarum</name>
    <dbReference type="NCBI Taxonomy" id="220668"/>
    <lineage>
        <taxon>Bacteria</taxon>
        <taxon>Bacillati</taxon>
        <taxon>Bacillota</taxon>
        <taxon>Bacilli</taxon>
        <taxon>Lactobacillales</taxon>
        <taxon>Lactobacillaceae</taxon>
        <taxon>Lactiplantibacillus</taxon>
    </lineage>
</organism>
<keyword id="KW-0963">Cytoplasm</keyword>
<keyword id="KW-0378">Hydrolase</keyword>
<keyword id="KW-0645">Protease</keyword>
<keyword id="KW-1185">Reference proteome</keyword>
<keyword id="KW-0720">Serine protease</keyword>
<reference key="1">
    <citation type="journal article" date="2003" name="Proc. Natl. Acad. Sci. U.S.A.">
        <title>Complete genome sequence of Lactobacillus plantarum WCFS1.</title>
        <authorList>
            <person name="Kleerebezem M."/>
            <person name="Boekhorst J."/>
            <person name="van Kranenburg R."/>
            <person name="Molenaar D."/>
            <person name="Kuipers O.P."/>
            <person name="Leer R."/>
            <person name="Tarchini R."/>
            <person name="Peters S.A."/>
            <person name="Sandbrink H.M."/>
            <person name="Fiers M.W.E.J."/>
            <person name="Stiekema W."/>
            <person name="Klein Lankhorst R.M."/>
            <person name="Bron P.A."/>
            <person name="Hoffer S.M."/>
            <person name="Nierop Groot M.N."/>
            <person name="Kerkhoven R."/>
            <person name="De Vries M."/>
            <person name="Ursing B."/>
            <person name="De Vos W.M."/>
            <person name="Siezen R.J."/>
        </authorList>
    </citation>
    <scope>NUCLEOTIDE SEQUENCE [LARGE SCALE GENOMIC DNA]</scope>
    <source>
        <strain>ATCC BAA-793 / NCIMB 8826 / WCFS1</strain>
    </source>
</reference>
<reference key="2">
    <citation type="journal article" date="2012" name="J. Bacteriol.">
        <title>Complete resequencing and reannotation of the Lactobacillus plantarum WCFS1 genome.</title>
        <authorList>
            <person name="Siezen R.J."/>
            <person name="Francke C."/>
            <person name="Renckens B."/>
            <person name="Boekhorst J."/>
            <person name="Wels M."/>
            <person name="Kleerebezem M."/>
            <person name="van Hijum S.A."/>
        </authorList>
    </citation>
    <scope>NUCLEOTIDE SEQUENCE [LARGE SCALE GENOMIC DNA]</scope>
    <scope>GENOME REANNOTATION</scope>
    <source>
        <strain>ATCC BAA-793 / NCIMB 8826 / WCFS1</strain>
    </source>
</reference>
<accession>Q88YH9</accession>
<accession>F9UM07</accession>
<feature type="chain" id="PRO_0000179575" description="ATP-dependent Clp protease proteolytic subunit">
    <location>
        <begin position="1"/>
        <end position="196"/>
    </location>
</feature>
<feature type="active site" description="Nucleophile" evidence="1">
    <location>
        <position position="98"/>
    </location>
</feature>
<feature type="active site" evidence="1">
    <location>
        <position position="123"/>
    </location>
</feature>
<sequence length="196" mass="21529">MYPVPTVIEQSSRGERAYDIYSRLLKDRIIMLSGPIEDNMANAIIAQLLFLDAQDSGKDIYLYINSPGGVVTAGLAIYDTMNFIKSDVQTIVMGMAASMASVLASSGTKGKRFALPNSEILIHQPSGGAQGQQTEIEIVAEEILKTRKKINQILADNSGQSVEKLNHDTERDNYLSAQEAKDYGLIDDIMENNKLK</sequence>
<proteinExistence type="inferred from homology"/>